<protein>
    <recommendedName>
        <fullName>Chaperone SurA</fullName>
    </recommendedName>
    <alternativeName>
        <fullName>Peptidyl-prolyl cis-trans isomerase SurA</fullName>
        <shortName>PPIase SurA</shortName>
        <ecNumber>5.2.1.8</ecNumber>
    </alternativeName>
    <alternativeName>
        <fullName>Rotamase SurA</fullName>
    </alternativeName>
</protein>
<name>SURA_BUCAP</name>
<proteinExistence type="inferred from homology"/>
<sequence length="432" mass="51748">MKVYFFLILYVFLSFFSITYSKELEIDKIIAIVNNQIILNSDVNQVLFSLKEEDQRVKIPLKINFLRNKIIKKLITETLILEEAKKFNIVVTDDQVNNVLSKYALKKNITIEELKRNILMNNTNTSFSYNDYFNKIKNSLKVKIIQDYVLHNRVHISEKEVDLFLNKLINTQNELKKIDINCIFLPFIKEKNKIFIKNTKILADHFAKKIKKDASFNYYYEYFKKNNNIFLSKEIRSKSLKYLKKIFLNKLKIIKKNQILGPILGLKGFYILKINKIENENKENLTTEFHIQHCLIRPSVILDDKQAKNSIYYIYNNIKNKKYSFDYAVQKLSHDVYSSHKKGDLGWISTDFFSNDFRNFLTDLRKNEISKPIKSNFGWHIIKLLDIRQVDKSNRIDKNLVYRFLLEKKIKKERYNWIRQLKKSSYIKIFKN</sequence>
<gene>
    <name type="primary">surA</name>
    <name type="ordered locus">BUsg_133</name>
</gene>
<accession>Q8KA01</accession>
<comment type="function">
    <text evidence="1">Chaperone involved in the correct folding and assembly of outer membrane proteins. Recognizes specific patterns of aromatic residues and the orientation of their side chains, which are found more frequently in integral outer membrane proteins. May act in both early periplasmic and late outer membrane-associated steps of protein maturation (By similarity).</text>
</comment>
<comment type="catalytic activity">
    <reaction>
        <text>[protein]-peptidylproline (omega=180) = [protein]-peptidylproline (omega=0)</text>
        <dbReference type="Rhea" id="RHEA:16237"/>
        <dbReference type="Rhea" id="RHEA-COMP:10747"/>
        <dbReference type="Rhea" id="RHEA-COMP:10748"/>
        <dbReference type="ChEBI" id="CHEBI:83833"/>
        <dbReference type="ChEBI" id="CHEBI:83834"/>
        <dbReference type="EC" id="5.2.1.8"/>
    </reaction>
</comment>
<comment type="subcellular location">
    <subcellularLocation>
        <location evidence="1">Periplasm</location>
    </subcellularLocation>
    <text evidence="1">Is capable of associating with the outer membrane.</text>
</comment>
<comment type="domain">
    <text evidence="1">The PPIase activity resides only in the second parvulin domain. The N-terminal region and the C-terminal tail are necessary and sufficient for the chaperone activity of SurA. The PPIase activity is dispensable for SurA to function as a chaperone. The N-terminal region and the C-terminal tail are also required for porin recognition (By similarity).</text>
</comment>
<keyword id="KW-0143">Chaperone</keyword>
<keyword id="KW-0413">Isomerase</keyword>
<keyword id="KW-0574">Periplasm</keyword>
<keyword id="KW-0677">Repeat</keyword>
<keyword id="KW-0697">Rotamase</keyword>
<keyword id="KW-0732">Signal</keyword>
<dbReference type="EC" id="5.2.1.8"/>
<dbReference type="EMBL" id="AE013218">
    <property type="protein sequence ID" value="AAM67701.1"/>
    <property type="molecule type" value="Genomic_DNA"/>
</dbReference>
<dbReference type="SMR" id="Q8KA01"/>
<dbReference type="STRING" id="198804.BUsg_133"/>
<dbReference type="KEGG" id="bas:BUsg_133"/>
<dbReference type="eggNOG" id="COG0760">
    <property type="taxonomic scope" value="Bacteria"/>
</dbReference>
<dbReference type="HOGENOM" id="CLU_034646_11_0_6"/>
<dbReference type="Proteomes" id="UP000000416">
    <property type="component" value="Chromosome"/>
</dbReference>
<dbReference type="GO" id="GO:0030288">
    <property type="term" value="C:outer membrane-bounded periplasmic space"/>
    <property type="evidence" value="ECO:0007669"/>
    <property type="project" value="InterPro"/>
</dbReference>
<dbReference type="GO" id="GO:0042277">
    <property type="term" value="F:peptide binding"/>
    <property type="evidence" value="ECO:0007669"/>
    <property type="project" value="InterPro"/>
</dbReference>
<dbReference type="GO" id="GO:0003755">
    <property type="term" value="F:peptidyl-prolyl cis-trans isomerase activity"/>
    <property type="evidence" value="ECO:0007669"/>
    <property type="project" value="UniProtKB-UniRule"/>
</dbReference>
<dbReference type="GO" id="GO:0051082">
    <property type="term" value="F:unfolded protein binding"/>
    <property type="evidence" value="ECO:0007669"/>
    <property type="project" value="UniProtKB-UniRule"/>
</dbReference>
<dbReference type="GO" id="GO:0043165">
    <property type="term" value="P:Gram-negative-bacterium-type cell outer membrane assembly"/>
    <property type="evidence" value="ECO:0007669"/>
    <property type="project" value="InterPro"/>
</dbReference>
<dbReference type="GO" id="GO:0006457">
    <property type="term" value="P:protein folding"/>
    <property type="evidence" value="ECO:0007669"/>
    <property type="project" value="UniProtKB-UniRule"/>
</dbReference>
<dbReference type="GO" id="GO:0050821">
    <property type="term" value="P:protein stabilization"/>
    <property type="evidence" value="ECO:0007669"/>
    <property type="project" value="InterPro"/>
</dbReference>
<dbReference type="Gene3D" id="3.10.50.40">
    <property type="match status" value="1"/>
</dbReference>
<dbReference type="Gene3D" id="1.10.4030.10">
    <property type="entry name" value="Porin chaperone SurA, peptide-binding domain"/>
    <property type="match status" value="1"/>
</dbReference>
<dbReference type="HAMAP" id="MF_01183">
    <property type="entry name" value="Chaperone_SurA"/>
    <property type="match status" value="1"/>
</dbReference>
<dbReference type="InterPro" id="IPR050280">
    <property type="entry name" value="OMP_Chaperone_SurA"/>
</dbReference>
<dbReference type="InterPro" id="IPR046357">
    <property type="entry name" value="PPIase_dom_sf"/>
</dbReference>
<dbReference type="InterPro" id="IPR000297">
    <property type="entry name" value="PPIase_PpiC"/>
</dbReference>
<dbReference type="InterPro" id="IPR023034">
    <property type="entry name" value="PPIase_SurA"/>
</dbReference>
<dbReference type="InterPro" id="IPR015391">
    <property type="entry name" value="SurA_N"/>
</dbReference>
<dbReference type="InterPro" id="IPR027304">
    <property type="entry name" value="Trigger_fact/SurA_dom_sf"/>
</dbReference>
<dbReference type="PANTHER" id="PTHR47637">
    <property type="entry name" value="CHAPERONE SURA"/>
    <property type="match status" value="1"/>
</dbReference>
<dbReference type="PANTHER" id="PTHR47637:SF1">
    <property type="entry name" value="CHAPERONE SURA"/>
    <property type="match status" value="1"/>
</dbReference>
<dbReference type="Pfam" id="PF00639">
    <property type="entry name" value="Rotamase"/>
    <property type="match status" value="1"/>
</dbReference>
<dbReference type="Pfam" id="PF09312">
    <property type="entry name" value="SurA_N"/>
    <property type="match status" value="1"/>
</dbReference>
<dbReference type="SUPFAM" id="SSF54534">
    <property type="entry name" value="FKBP-like"/>
    <property type="match status" value="1"/>
</dbReference>
<dbReference type="SUPFAM" id="SSF109998">
    <property type="entry name" value="Triger factor/SurA peptide-binding domain-like"/>
    <property type="match status" value="1"/>
</dbReference>
<dbReference type="PROSITE" id="PS50198">
    <property type="entry name" value="PPIC_PPIASE_2"/>
    <property type="match status" value="1"/>
</dbReference>
<organism>
    <name type="scientific">Buchnera aphidicola subsp. Schizaphis graminum (strain Sg)</name>
    <dbReference type="NCBI Taxonomy" id="198804"/>
    <lineage>
        <taxon>Bacteria</taxon>
        <taxon>Pseudomonadati</taxon>
        <taxon>Pseudomonadota</taxon>
        <taxon>Gammaproteobacteria</taxon>
        <taxon>Enterobacterales</taxon>
        <taxon>Erwiniaceae</taxon>
        <taxon>Buchnera</taxon>
    </lineage>
</organism>
<feature type="signal peptide" evidence="2">
    <location>
        <begin position="1"/>
        <end position="21"/>
    </location>
</feature>
<feature type="chain" id="PRO_0000025541" description="Chaperone SurA">
    <location>
        <begin position="22"/>
        <end position="432"/>
    </location>
</feature>
<feature type="domain" description="PpiC 1">
    <location>
        <begin position="175"/>
        <end position="276"/>
    </location>
</feature>
<feature type="domain" description="PpiC 2">
    <location>
        <begin position="286"/>
        <end position="386"/>
    </location>
</feature>
<reference key="1">
    <citation type="journal article" date="2002" name="Science">
        <title>50 million years of genomic stasis in endosymbiotic bacteria.</title>
        <authorList>
            <person name="Tamas I."/>
            <person name="Klasson L."/>
            <person name="Canbaeck B."/>
            <person name="Naeslund A.K."/>
            <person name="Eriksson A.-S."/>
            <person name="Wernegreen J.J."/>
            <person name="Sandstroem J.P."/>
            <person name="Moran N.A."/>
            <person name="Andersson S.G.E."/>
        </authorList>
    </citation>
    <scope>NUCLEOTIDE SEQUENCE [LARGE SCALE GENOMIC DNA]</scope>
    <source>
        <strain>Sg</strain>
    </source>
</reference>
<evidence type="ECO:0000250" key="1"/>
<evidence type="ECO:0000255" key="2"/>